<accession>B0Z4Y3</accession>
<keyword id="KW-0150">Chloroplast</keyword>
<keyword id="KW-0934">Plastid</keyword>
<keyword id="KW-0687">Ribonucleoprotein</keyword>
<keyword id="KW-0689">Ribosomal protein</keyword>
<keyword id="KW-0694">RNA-binding</keyword>
<keyword id="KW-0699">rRNA-binding</keyword>
<proteinExistence type="inferred from homology"/>
<gene>
    <name evidence="1" type="primary">rpl20</name>
</gene>
<organism>
    <name type="scientific">Oenothera biennis</name>
    <name type="common">German evening primrose</name>
    <name type="synonym">Onagra biennis</name>
    <dbReference type="NCBI Taxonomy" id="3942"/>
    <lineage>
        <taxon>Eukaryota</taxon>
        <taxon>Viridiplantae</taxon>
        <taxon>Streptophyta</taxon>
        <taxon>Embryophyta</taxon>
        <taxon>Tracheophyta</taxon>
        <taxon>Spermatophyta</taxon>
        <taxon>Magnoliopsida</taxon>
        <taxon>eudicotyledons</taxon>
        <taxon>Gunneridae</taxon>
        <taxon>Pentapetalae</taxon>
        <taxon>rosids</taxon>
        <taxon>malvids</taxon>
        <taxon>Myrtales</taxon>
        <taxon>Onagraceae</taxon>
        <taxon>Onagroideae</taxon>
        <taxon>Onagreae</taxon>
        <taxon>Oenothera</taxon>
    </lineage>
</organism>
<dbReference type="EMBL" id="EU262889">
    <property type="protein sequence ID" value="ABW98895.1"/>
    <property type="molecule type" value="Genomic_DNA"/>
</dbReference>
<dbReference type="RefSeq" id="YP_001687390.1">
    <property type="nucleotide sequence ID" value="NC_010361.1"/>
</dbReference>
<dbReference type="SMR" id="B0Z4Y3"/>
<dbReference type="GeneID" id="5952082"/>
<dbReference type="GO" id="GO:0009507">
    <property type="term" value="C:chloroplast"/>
    <property type="evidence" value="ECO:0007669"/>
    <property type="project" value="UniProtKB-SubCell"/>
</dbReference>
<dbReference type="GO" id="GO:1990904">
    <property type="term" value="C:ribonucleoprotein complex"/>
    <property type="evidence" value="ECO:0007669"/>
    <property type="project" value="UniProtKB-KW"/>
</dbReference>
<dbReference type="GO" id="GO:0005840">
    <property type="term" value="C:ribosome"/>
    <property type="evidence" value="ECO:0007669"/>
    <property type="project" value="UniProtKB-KW"/>
</dbReference>
<dbReference type="GO" id="GO:0019843">
    <property type="term" value="F:rRNA binding"/>
    <property type="evidence" value="ECO:0007669"/>
    <property type="project" value="UniProtKB-UniRule"/>
</dbReference>
<dbReference type="GO" id="GO:0003735">
    <property type="term" value="F:structural constituent of ribosome"/>
    <property type="evidence" value="ECO:0007669"/>
    <property type="project" value="InterPro"/>
</dbReference>
<dbReference type="GO" id="GO:0000027">
    <property type="term" value="P:ribosomal large subunit assembly"/>
    <property type="evidence" value="ECO:0007669"/>
    <property type="project" value="UniProtKB-UniRule"/>
</dbReference>
<dbReference type="GO" id="GO:0006412">
    <property type="term" value="P:translation"/>
    <property type="evidence" value="ECO:0007669"/>
    <property type="project" value="InterPro"/>
</dbReference>
<dbReference type="CDD" id="cd07026">
    <property type="entry name" value="Ribosomal_L20"/>
    <property type="match status" value="1"/>
</dbReference>
<dbReference type="FunFam" id="1.10.1900.20:FF:000001">
    <property type="entry name" value="50S ribosomal protein L20"/>
    <property type="match status" value="1"/>
</dbReference>
<dbReference type="Gene3D" id="6.10.160.10">
    <property type="match status" value="1"/>
</dbReference>
<dbReference type="Gene3D" id="1.10.1900.20">
    <property type="entry name" value="Ribosomal protein L20"/>
    <property type="match status" value="1"/>
</dbReference>
<dbReference type="HAMAP" id="MF_00382">
    <property type="entry name" value="Ribosomal_bL20"/>
    <property type="match status" value="1"/>
</dbReference>
<dbReference type="InterPro" id="IPR005813">
    <property type="entry name" value="Ribosomal_bL20"/>
</dbReference>
<dbReference type="InterPro" id="IPR049946">
    <property type="entry name" value="RIBOSOMAL_L20_CS"/>
</dbReference>
<dbReference type="InterPro" id="IPR035566">
    <property type="entry name" value="Ribosomal_protein_bL20_C"/>
</dbReference>
<dbReference type="NCBIfam" id="TIGR01032">
    <property type="entry name" value="rplT_bact"/>
    <property type="match status" value="1"/>
</dbReference>
<dbReference type="PANTHER" id="PTHR10986">
    <property type="entry name" value="39S RIBOSOMAL PROTEIN L20"/>
    <property type="match status" value="1"/>
</dbReference>
<dbReference type="Pfam" id="PF00453">
    <property type="entry name" value="Ribosomal_L20"/>
    <property type="match status" value="1"/>
</dbReference>
<dbReference type="PRINTS" id="PR00062">
    <property type="entry name" value="RIBOSOMALL20"/>
</dbReference>
<dbReference type="SUPFAM" id="SSF74731">
    <property type="entry name" value="Ribosomal protein L20"/>
    <property type="match status" value="1"/>
</dbReference>
<dbReference type="PROSITE" id="PS00937">
    <property type="entry name" value="RIBOSOMAL_L20"/>
    <property type="match status" value="1"/>
</dbReference>
<geneLocation type="chloroplast"/>
<name>RK20_OENBI</name>
<reference key="1">
    <citation type="journal article" date="2008" name="Nucleic Acids Res.">
        <title>The complete nucleotide sequences of the five genetically distinct plastid genomes of Oenothera, subsection Oenothera: I. Sequence evaluation and plastome evolution.</title>
        <authorList>
            <person name="Greiner S."/>
            <person name="Wang X."/>
            <person name="Rauwolf U."/>
            <person name="Silber M.V."/>
            <person name="Mayer K."/>
            <person name="Meurer J."/>
            <person name="Haberer G."/>
            <person name="Herrmann R.G."/>
        </authorList>
    </citation>
    <scope>NUCLEOTIDE SEQUENCE [LARGE SCALE GENOMIC DNA]</scope>
    <source>
        <strain>cv. Suaveolens Grado</strain>
    </source>
</reference>
<sequence length="130" mass="15853">MTRIRRGYIARRRRTKTRFFASSWRGARGNLTRAIIQQRIRAWFSSHRDRTRQKRDFRRLWITRINAAIRENGRSSIYSKLIHNLYKRQLFLNRKMLAQLAILNRNCLYMISNQILKEVDWQESATILEI</sequence>
<protein>
    <recommendedName>
        <fullName evidence="1">Large ribosomal subunit protein bL20c</fullName>
    </recommendedName>
    <alternativeName>
        <fullName evidence="2">50S ribosomal protein L20, chloroplastic</fullName>
    </alternativeName>
</protein>
<comment type="function">
    <text evidence="1">Binds directly to 23S ribosomal RNA and is necessary for the in vitro assembly process of the 50S ribosomal subunit. It is not involved in the protein synthesizing functions of that subunit.</text>
</comment>
<comment type="subcellular location">
    <subcellularLocation>
        <location>Plastid</location>
        <location>Chloroplast</location>
    </subcellularLocation>
</comment>
<comment type="similarity">
    <text evidence="1">Belongs to the bacterial ribosomal protein bL20 family.</text>
</comment>
<feature type="chain" id="PRO_0000355519" description="Large ribosomal subunit protein bL20c">
    <location>
        <begin position="1"/>
        <end position="130"/>
    </location>
</feature>
<evidence type="ECO:0000255" key="1">
    <source>
        <dbReference type="HAMAP-Rule" id="MF_00382"/>
    </source>
</evidence>
<evidence type="ECO:0000305" key="2"/>